<proteinExistence type="inferred from homology"/>
<reference key="1">
    <citation type="journal article" date="2009" name="Stand. Genomic Sci.">
        <title>Complete genome sequence of Beutenbergia cavernae type strain (HKI 0122).</title>
        <authorList>
            <person name="Land M."/>
            <person name="Pukall R."/>
            <person name="Abt B."/>
            <person name="Goker M."/>
            <person name="Rohde M."/>
            <person name="Glavina Del Rio T."/>
            <person name="Tice H."/>
            <person name="Copeland A."/>
            <person name="Cheng J.F."/>
            <person name="Lucas S."/>
            <person name="Chen F."/>
            <person name="Nolan M."/>
            <person name="Bruce D."/>
            <person name="Goodwin L."/>
            <person name="Pitluck S."/>
            <person name="Ivanova N."/>
            <person name="Mavromatis K."/>
            <person name="Ovchinnikova G."/>
            <person name="Pati A."/>
            <person name="Chen A."/>
            <person name="Palaniappan K."/>
            <person name="Hauser L."/>
            <person name="Chang Y.J."/>
            <person name="Jefferies C.C."/>
            <person name="Saunders E."/>
            <person name="Brettin T."/>
            <person name="Detter J.C."/>
            <person name="Han C."/>
            <person name="Chain P."/>
            <person name="Bristow J."/>
            <person name="Eisen J.A."/>
            <person name="Markowitz V."/>
            <person name="Hugenholtz P."/>
            <person name="Kyrpides N.C."/>
            <person name="Klenk H.P."/>
            <person name="Lapidus A."/>
        </authorList>
    </citation>
    <scope>NUCLEOTIDE SEQUENCE [LARGE SCALE GENOMIC DNA]</scope>
    <source>
        <strain>ATCC BAA-8 / DSM 12333 / CCUG 43141 / JCM 11478 / NBRC 16432 / NCIMB 13614 / HKI 0122</strain>
    </source>
</reference>
<feature type="chain" id="PRO_1000214722" description="Large ribosomal subunit protein uL16">
    <location>
        <begin position="1"/>
        <end position="139"/>
    </location>
</feature>
<feature type="region of interest" description="Disordered" evidence="2">
    <location>
        <begin position="1"/>
        <end position="24"/>
    </location>
</feature>
<feature type="compositionally biased region" description="Basic residues" evidence="2">
    <location>
        <begin position="1"/>
        <end position="17"/>
    </location>
</feature>
<accession>C5C0I4</accession>
<keyword id="KW-1185">Reference proteome</keyword>
<keyword id="KW-0687">Ribonucleoprotein</keyword>
<keyword id="KW-0689">Ribosomal protein</keyword>
<keyword id="KW-0694">RNA-binding</keyword>
<keyword id="KW-0699">rRNA-binding</keyword>
<keyword id="KW-0820">tRNA-binding</keyword>
<name>RL16_BEUC1</name>
<dbReference type="EMBL" id="CP001618">
    <property type="protein sequence ID" value="ACQ81380.1"/>
    <property type="molecule type" value="Genomic_DNA"/>
</dbReference>
<dbReference type="RefSeq" id="WP_015883620.1">
    <property type="nucleotide sequence ID" value="NC_012669.1"/>
</dbReference>
<dbReference type="SMR" id="C5C0I4"/>
<dbReference type="STRING" id="471853.Bcav_3136"/>
<dbReference type="KEGG" id="bcv:Bcav_3136"/>
<dbReference type="eggNOG" id="COG0197">
    <property type="taxonomic scope" value="Bacteria"/>
</dbReference>
<dbReference type="HOGENOM" id="CLU_078858_2_1_11"/>
<dbReference type="OrthoDB" id="9802589at2"/>
<dbReference type="Proteomes" id="UP000007962">
    <property type="component" value="Chromosome"/>
</dbReference>
<dbReference type="GO" id="GO:0022625">
    <property type="term" value="C:cytosolic large ribosomal subunit"/>
    <property type="evidence" value="ECO:0007669"/>
    <property type="project" value="TreeGrafter"/>
</dbReference>
<dbReference type="GO" id="GO:0019843">
    <property type="term" value="F:rRNA binding"/>
    <property type="evidence" value="ECO:0007669"/>
    <property type="project" value="UniProtKB-UniRule"/>
</dbReference>
<dbReference type="GO" id="GO:0003735">
    <property type="term" value="F:structural constituent of ribosome"/>
    <property type="evidence" value="ECO:0007669"/>
    <property type="project" value="InterPro"/>
</dbReference>
<dbReference type="GO" id="GO:0000049">
    <property type="term" value="F:tRNA binding"/>
    <property type="evidence" value="ECO:0007669"/>
    <property type="project" value="UniProtKB-KW"/>
</dbReference>
<dbReference type="GO" id="GO:0006412">
    <property type="term" value="P:translation"/>
    <property type="evidence" value="ECO:0007669"/>
    <property type="project" value="UniProtKB-UniRule"/>
</dbReference>
<dbReference type="CDD" id="cd01433">
    <property type="entry name" value="Ribosomal_L16_L10e"/>
    <property type="match status" value="1"/>
</dbReference>
<dbReference type="FunFam" id="3.90.1170.10:FF:000001">
    <property type="entry name" value="50S ribosomal protein L16"/>
    <property type="match status" value="1"/>
</dbReference>
<dbReference type="Gene3D" id="3.90.1170.10">
    <property type="entry name" value="Ribosomal protein L10e/L16"/>
    <property type="match status" value="1"/>
</dbReference>
<dbReference type="HAMAP" id="MF_01342">
    <property type="entry name" value="Ribosomal_uL16"/>
    <property type="match status" value="1"/>
</dbReference>
<dbReference type="InterPro" id="IPR047873">
    <property type="entry name" value="Ribosomal_uL16"/>
</dbReference>
<dbReference type="InterPro" id="IPR000114">
    <property type="entry name" value="Ribosomal_uL16_bact-type"/>
</dbReference>
<dbReference type="InterPro" id="IPR020798">
    <property type="entry name" value="Ribosomal_uL16_CS"/>
</dbReference>
<dbReference type="InterPro" id="IPR016180">
    <property type="entry name" value="Ribosomal_uL16_dom"/>
</dbReference>
<dbReference type="InterPro" id="IPR036920">
    <property type="entry name" value="Ribosomal_uL16_sf"/>
</dbReference>
<dbReference type="NCBIfam" id="TIGR01164">
    <property type="entry name" value="rplP_bact"/>
    <property type="match status" value="1"/>
</dbReference>
<dbReference type="PANTHER" id="PTHR12220">
    <property type="entry name" value="50S/60S RIBOSOMAL PROTEIN L16"/>
    <property type="match status" value="1"/>
</dbReference>
<dbReference type="PANTHER" id="PTHR12220:SF13">
    <property type="entry name" value="LARGE RIBOSOMAL SUBUNIT PROTEIN UL16M"/>
    <property type="match status" value="1"/>
</dbReference>
<dbReference type="Pfam" id="PF00252">
    <property type="entry name" value="Ribosomal_L16"/>
    <property type="match status" value="1"/>
</dbReference>
<dbReference type="PRINTS" id="PR00060">
    <property type="entry name" value="RIBOSOMALL16"/>
</dbReference>
<dbReference type="SUPFAM" id="SSF54686">
    <property type="entry name" value="Ribosomal protein L16p/L10e"/>
    <property type="match status" value="1"/>
</dbReference>
<dbReference type="PROSITE" id="PS00586">
    <property type="entry name" value="RIBOSOMAL_L16_1"/>
    <property type="match status" value="1"/>
</dbReference>
<dbReference type="PROSITE" id="PS00701">
    <property type="entry name" value="RIBOSOMAL_L16_2"/>
    <property type="match status" value="1"/>
</dbReference>
<gene>
    <name evidence="1" type="primary">rplP</name>
    <name type="ordered locus">Bcav_3136</name>
</gene>
<evidence type="ECO:0000255" key="1">
    <source>
        <dbReference type="HAMAP-Rule" id="MF_01342"/>
    </source>
</evidence>
<evidence type="ECO:0000256" key="2">
    <source>
        <dbReference type="SAM" id="MobiDB-lite"/>
    </source>
</evidence>
<evidence type="ECO:0000305" key="3"/>
<comment type="function">
    <text evidence="1">Binds 23S rRNA and is also seen to make contacts with the A and possibly P site tRNAs.</text>
</comment>
<comment type="subunit">
    <text evidence="1">Part of the 50S ribosomal subunit.</text>
</comment>
<comment type="similarity">
    <text evidence="1">Belongs to the universal ribosomal protein uL16 family.</text>
</comment>
<protein>
    <recommendedName>
        <fullName evidence="1">Large ribosomal subunit protein uL16</fullName>
    </recommendedName>
    <alternativeName>
        <fullName evidence="3">50S ribosomal protein L16</fullName>
    </alternativeName>
</protein>
<organism>
    <name type="scientific">Beutenbergia cavernae (strain ATCC BAA-8 / DSM 12333 / CCUG 43141 / JCM 11478 / NBRC 16432 / NCIMB 13614 / HKI 0122)</name>
    <dbReference type="NCBI Taxonomy" id="471853"/>
    <lineage>
        <taxon>Bacteria</taxon>
        <taxon>Bacillati</taxon>
        <taxon>Actinomycetota</taxon>
        <taxon>Actinomycetes</taxon>
        <taxon>Micrococcales</taxon>
        <taxon>Beutenbergiaceae</taxon>
        <taxon>Beutenbergia</taxon>
    </lineage>
</organism>
<sequence length="139" mass="15722">MLIPRRTKHRKQHHPRRTGAASGGTTIAFGDYGIQAVEGGYLTNRQIEAARIAMTRHIKRGGKVWINIYPDRPLTKKPAETRMGSGKGSVEWWIANIKPGRVLFELAGVDEPLAREAMRRAQHKLPMKTRFVRREGGDQ</sequence>